<name>GME66_PESMI</name>
<gene>
    <name evidence="5" type="ORF">GME11366</name>
</gene>
<dbReference type="EC" id="2.1.1.-" evidence="2"/>
<dbReference type="EMBL" id="MK590985">
    <property type="protein sequence ID" value="QED41497.1"/>
    <property type="molecule type" value="mRNA"/>
</dbReference>
<dbReference type="SMR" id="A0A5B8YVD8"/>
<dbReference type="GO" id="GO:0008171">
    <property type="term" value="F:O-methyltransferase activity"/>
    <property type="evidence" value="ECO:0007669"/>
    <property type="project" value="InterPro"/>
</dbReference>
<dbReference type="GO" id="GO:0046983">
    <property type="term" value="F:protein dimerization activity"/>
    <property type="evidence" value="ECO:0007669"/>
    <property type="project" value="InterPro"/>
</dbReference>
<dbReference type="GO" id="GO:0032259">
    <property type="term" value="P:methylation"/>
    <property type="evidence" value="ECO:0007669"/>
    <property type="project" value="UniProtKB-KW"/>
</dbReference>
<dbReference type="GO" id="GO:0044550">
    <property type="term" value="P:secondary metabolite biosynthetic process"/>
    <property type="evidence" value="ECO:0007669"/>
    <property type="project" value="UniProtKB-ARBA"/>
</dbReference>
<dbReference type="Gene3D" id="3.40.50.150">
    <property type="entry name" value="Vaccinia Virus protein VP39"/>
    <property type="match status" value="1"/>
</dbReference>
<dbReference type="Gene3D" id="1.10.10.10">
    <property type="entry name" value="Winged helix-like DNA-binding domain superfamily/Winged helix DNA-binding domain"/>
    <property type="match status" value="1"/>
</dbReference>
<dbReference type="InterPro" id="IPR016461">
    <property type="entry name" value="COMT-like"/>
</dbReference>
<dbReference type="InterPro" id="IPR001077">
    <property type="entry name" value="O_MeTrfase_dom"/>
</dbReference>
<dbReference type="InterPro" id="IPR012967">
    <property type="entry name" value="Plant_O-MeTrfase_dimerisation"/>
</dbReference>
<dbReference type="InterPro" id="IPR029063">
    <property type="entry name" value="SAM-dependent_MTases_sf"/>
</dbReference>
<dbReference type="InterPro" id="IPR036388">
    <property type="entry name" value="WH-like_DNA-bd_sf"/>
</dbReference>
<dbReference type="InterPro" id="IPR036390">
    <property type="entry name" value="WH_DNA-bd_sf"/>
</dbReference>
<dbReference type="PANTHER" id="PTHR43712:SF11">
    <property type="entry name" value="O-METHYLTRANSFERASE (AFU_ORTHOLOGUE AFUA_2G17820)-RELATED"/>
    <property type="match status" value="1"/>
</dbReference>
<dbReference type="PANTHER" id="PTHR43712">
    <property type="entry name" value="PUTATIVE (AFU_ORTHOLOGUE AFUA_4G14580)-RELATED"/>
    <property type="match status" value="1"/>
</dbReference>
<dbReference type="Pfam" id="PF08100">
    <property type="entry name" value="Dimerisation"/>
    <property type="match status" value="1"/>
</dbReference>
<dbReference type="Pfam" id="PF00891">
    <property type="entry name" value="Methyltransf_2"/>
    <property type="match status" value="1"/>
</dbReference>
<dbReference type="PIRSF" id="PIRSF005739">
    <property type="entry name" value="O-mtase"/>
    <property type="match status" value="1"/>
</dbReference>
<dbReference type="SUPFAM" id="SSF53335">
    <property type="entry name" value="S-adenosyl-L-methionine-dependent methyltransferases"/>
    <property type="match status" value="1"/>
</dbReference>
<dbReference type="SUPFAM" id="SSF46785">
    <property type="entry name" value="Winged helix' DNA-binding domain"/>
    <property type="match status" value="1"/>
</dbReference>
<dbReference type="PROSITE" id="PS51683">
    <property type="entry name" value="SAM_OMT_II"/>
    <property type="match status" value="1"/>
</dbReference>
<reference key="1">
    <citation type="journal article" date="2019" name="J. Microbiol. Biotechnol.">
        <title>A gene cluster for the biosynthesis of dibenzodioxocinons in the endophyte Pestalotiopsis microspora, a taxol producer.</title>
        <authorList>
            <person name="Liu Y."/>
            <person name="Chen L."/>
            <person name="Xie Q."/>
            <person name="Yu X."/>
            <person name="Duan A."/>
            <person name="Lin Y."/>
            <person name="Xiang B."/>
            <person name="Hao X."/>
            <person name="Chen W."/>
            <person name="Zhu X."/>
        </authorList>
    </citation>
    <scope>NUCLEOTIDE SEQUENCE [MRNA]</scope>
    <scope>FUNCTION</scope>
    <scope>PATHWAY</scope>
    <source>
        <strain>NK17</strain>
    </source>
</reference>
<reference key="2">
    <citation type="journal article" date="2022" name="Microbiol. Res.">
        <title>Acquiring novel chemicals by overexpression of a transcription factor DibT in the dibenzodioxocinone biosynthetic cluster in Pestalotiopsis microspora.</title>
        <authorList>
            <person name="Liu Y."/>
            <person name="Fu Y."/>
            <person name="Zhou M."/>
            <person name="Hao X."/>
            <person name="Zhang P."/>
            <person name="Zhu X."/>
        </authorList>
    </citation>
    <scope>INDUCTION</scope>
</reference>
<evidence type="ECO:0000250" key="1">
    <source>
        <dbReference type="UniProtKB" id="O04385"/>
    </source>
</evidence>
<evidence type="ECO:0000255" key="2">
    <source>
        <dbReference type="PROSITE-ProRule" id="PRU01020"/>
    </source>
</evidence>
<evidence type="ECO:0000269" key="3">
    <source>
    </source>
</evidence>
<evidence type="ECO:0000269" key="4">
    <source>
    </source>
</evidence>
<evidence type="ECO:0000303" key="5">
    <source>
    </source>
</evidence>
<evidence type="ECO:0000305" key="6"/>
<evidence type="ECO:0000305" key="7">
    <source>
    </source>
</evidence>
<accession>A0A5B8YVD8</accession>
<proteinExistence type="evidence at transcript level"/>
<keyword id="KW-0489">Methyltransferase</keyword>
<keyword id="KW-0949">S-adenosyl-L-methionine</keyword>
<keyword id="KW-0808">Transferase</keyword>
<sequence>MPTDTNSIIALSKSIGKLAREFENGATPSKEVQQALVLASEQLGVAAREPDDNVYNISGQISQNAAIRSAIALNAFALMPEDGSTITVEDISTKMNADPELVGRILRACASAHVFGHPTVNEYCHNNLSRVYLQGDHRQLAAQIYDFTGHAVLAIPDFGEEKQWKSMGDYVRGPFQLGFATDLSYMEYLQANPQRLKSWNSGMRTGKIGHRTSAFPFDRALELDPCGKDGIAIVDVGGGRGQALEGIHQDYPNLEGRLVLQDLPDVIKDAKANGLPDYIETTPGTFFDPLTAKGARIYHFRRVFHIWTQTKALELLENTKNAMNDYSRMLIADMVLADVGCERDLAMQDLNMMSLGGMERSESEWTSLIESAGLVLKKIWQNDQGPKHAVVEATLPTFKGHGLE</sequence>
<feature type="chain" id="PRO_0000456744" description="O-methyltransferase GME11366">
    <location>
        <begin position="1"/>
        <end position="404"/>
    </location>
</feature>
<feature type="active site" description="Proton acceptor" evidence="2">
    <location>
        <position position="305"/>
    </location>
</feature>
<feature type="binding site" evidence="1">
    <location>
        <begin position="237"/>
        <end position="238"/>
    </location>
    <ligand>
        <name>S-adenosyl-L-methionine</name>
        <dbReference type="ChEBI" id="CHEBI:59789"/>
    </ligand>
</feature>
<feature type="binding site" evidence="2">
    <location>
        <position position="262"/>
    </location>
    <ligand>
        <name>S-adenosyl-L-methionine</name>
        <dbReference type="ChEBI" id="CHEBI:59789"/>
    </ligand>
</feature>
<feature type="binding site" evidence="1">
    <location>
        <position position="301"/>
    </location>
    <ligand>
        <name>S-adenosyl-L-methionine</name>
        <dbReference type="ChEBI" id="CHEBI:59789"/>
    </ligand>
</feature>
<feature type="binding site" evidence="2">
    <location>
        <position position="302"/>
    </location>
    <ligand>
        <name>S-adenosyl-L-methionine</name>
        <dbReference type="ChEBI" id="CHEBI:59789"/>
    </ligand>
</feature>
<comment type="function">
    <text evidence="3 7">O-methyltransferase; part of the gene cluster that mediates the biosynthesis of dibenzodioxocinones such as pestalotiollide B, a novel class of inhibitors against cholesterol ester transfer protein (CEPT) (PubMed:31474098). The biosynthesis initiates from condensation of acetate and malonate units catalyzed by the non-reducing PKS pks8/GME11356. Pks8/GME11356 lacks a thioesterase (TE) domain, which is important to the cyclizing of the third ring of atrochrysone carboxylic acid, and the esterase GME11355 might play the role of TE and catalyzes the cyclization reaction of the C ring. The lactamase-like protein GME11357 (or other beta-lactamases in Pestalotiopsis microspora) probably hydrolyzes the thioester bond between the ACP of pks8/GME11356 and the intermediate to release atrochrysone carboxylic acid, which is spontaneously dehydrates to form endocrocin anthrone. Endocrocin anthrone is further converted to emodin via the endocrocin intermediate. Emodin is then oxidized by several enzymes such as the Baeyer-Villiger oxidase GME11358, the oxidoreductase GME11367, the short chain dehydrogenase/reductase GME11373, as well as by other oxidoreductases from the cluster, to modify the A and C rings and open the B ring, and finally yield monodictyphenone. The prenyltransferase GME11375 may catalyze the addition reaction between the C5 side chains and the carbon bone of dibenzodioxocinones. The remaining biochemical reactions to the final product dibenzodioxocinones should be methylation catalyzed by methyltransferase GME11366 and reduction and lactonization reaction catalyzed by a series of oxidordeuctases (Probable).</text>
</comment>
<comment type="pathway">
    <text evidence="7">Secondary metabolite biosynthesis.</text>
</comment>
<comment type="induction">
    <text evidence="4">The expression of the dibenzodioxocinones biosynthesis cluster is positively regulated by the transcription factor dibT.</text>
</comment>
<comment type="similarity">
    <text evidence="6">Belongs to the class I-like SAM-binding methyltransferase superfamily. Cation-independent O-methyltransferase family.</text>
</comment>
<protein>
    <recommendedName>
        <fullName evidence="5">O-methyltransferase GME11366</fullName>
        <ecNumber evidence="2">2.1.1.-</ecNumber>
    </recommendedName>
    <alternativeName>
        <fullName evidence="5">Dibenzodioxocinones biosynthesis cluster protein GME11366</fullName>
    </alternativeName>
</protein>
<organism>
    <name type="scientific">Pestalotiopsis microspora</name>
    <dbReference type="NCBI Taxonomy" id="85828"/>
    <lineage>
        <taxon>Eukaryota</taxon>
        <taxon>Fungi</taxon>
        <taxon>Dikarya</taxon>
        <taxon>Ascomycota</taxon>
        <taxon>Pezizomycotina</taxon>
        <taxon>Sordariomycetes</taxon>
        <taxon>Xylariomycetidae</taxon>
        <taxon>Amphisphaeriales</taxon>
        <taxon>Sporocadaceae</taxon>
        <taxon>Pestalotiopsis</taxon>
    </lineage>
</organism>